<sequence>MSKLWGGRFTEEAEAWVEEFGASISFDQQLVNQDINGSIAHVTMLAKQGIVTKEEAEKIKIGLQYLLEEAKQNKLNFSVEAEDIHLNIEKMLIEKIGEVGGKLHTGRSRNDQVATDMHLYLKEKVEHIMKATKQLQTVLVHQAENNIETIMPGYTHLQRAQPISFAHHILAYFWMLERDVNRYEDSLKRINISPLGAGALAGTTFPIDREYSAELLGFNGIYENSLDAVSDRDFILEFLSNSSILMMHLSRFCEELILWSSQEFQFIEMSDQYATGSSIMPQKKNPDMAELIRGKTGRVYGNLFSLLTVMKGLPLAYNKDLQEDKEGMFDTVKTVEGCLHIMAGMLETMTVNKEKMGQAVTQDFSNATEIADYLASKGLPFRQAHEIVGKLVLHCTQKGIYLVDVPLETYKEMSSLFEEDLYEVLSPYAAVKRRNSAGGTGFEQIEKALEKAKGLTKEAIKN</sequence>
<keyword id="KW-0028">Amino-acid biosynthesis</keyword>
<keyword id="KW-0055">Arginine biosynthesis</keyword>
<keyword id="KW-0963">Cytoplasm</keyword>
<keyword id="KW-0456">Lyase</keyword>
<name>ARLY_BACCZ</name>
<feature type="chain" id="PRO_0000137737" description="Argininosuccinate lyase">
    <location>
        <begin position="1"/>
        <end position="462"/>
    </location>
</feature>
<comment type="catalytic activity">
    <reaction evidence="1">
        <text>2-(N(omega)-L-arginino)succinate = fumarate + L-arginine</text>
        <dbReference type="Rhea" id="RHEA:24020"/>
        <dbReference type="ChEBI" id="CHEBI:29806"/>
        <dbReference type="ChEBI" id="CHEBI:32682"/>
        <dbReference type="ChEBI" id="CHEBI:57472"/>
        <dbReference type="EC" id="4.3.2.1"/>
    </reaction>
</comment>
<comment type="pathway">
    <text evidence="1">Amino-acid biosynthesis; L-arginine biosynthesis; L-arginine from L-ornithine and carbamoyl phosphate: step 3/3.</text>
</comment>
<comment type="subcellular location">
    <subcellularLocation>
        <location evidence="1">Cytoplasm</location>
    </subcellularLocation>
</comment>
<comment type="similarity">
    <text evidence="1">Belongs to the lyase 1 family. Argininosuccinate lyase subfamily.</text>
</comment>
<protein>
    <recommendedName>
        <fullName evidence="1">Argininosuccinate lyase</fullName>
        <shortName evidence="1">ASAL</shortName>
        <ecNumber evidence="1">4.3.2.1</ecNumber>
    </recommendedName>
    <alternativeName>
        <fullName evidence="1">Arginosuccinase</fullName>
    </alternativeName>
</protein>
<reference key="1">
    <citation type="journal article" date="2006" name="J. Bacteriol.">
        <title>Pathogenomic sequence analysis of Bacillus cereus and Bacillus thuringiensis isolates closely related to Bacillus anthracis.</title>
        <authorList>
            <person name="Han C.S."/>
            <person name="Xie G."/>
            <person name="Challacombe J.F."/>
            <person name="Altherr M.R."/>
            <person name="Bhotika S.S."/>
            <person name="Bruce D."/>
            <person name="Campbell C.S."/>
            <person name="Campbell M.L."/>
            <person name="Chen J."/>
            <person name="Chertkov O."/>
            <person name="Cleland C."/>
            <person name="Dimitrijevic M."/>
            <person name="Doggett N.A."/>
            <person name="Fawcett J.J."/>
            <person name="Glavina T."/>
            <person name="Goodwin L.A."/>
            <person name="Hill K.K."/>
            <person name="Hitchcock P."/>
            <person name="Jackson P.J."/>
            <person name="Keim P."/>
            <person name="Kewalramani A.R."/>
            <person name="Longmire J."/>
            <person name="Lucas S."/>
            <person name="Malfatti S."/>
            <person name="McMurry K."/>
            <person name="Meincke L.J."/>
            <person name="Misra M."/>
            <person name="Moseman B.L."/>
            <person name="Mundt M."/>
            <person name="Munk A.C."/>
            <person name="Okinaka R.T."/>
            <person name="Parson-Quintana B."/>
            <person name="Reilly L.P."/>
            <person name="Richardson P."/>
            <person name="Robinson D.L."/>
            <person name="Rubin E."/>
            <person name="Saunders E."/>
            <person name="Tapia R."/>
            <person name="Tesmer J.G."/>
            <person name="Thayer N."/>
            <person name="Thompson L.S."/>
            <person name="Tice H."/>
            <person name="Ticknor L.O."/>
            <person name="Wills P.L."/>
            <person name="Brettin T.S."/>
            <person name="Gilna P."/>
        </authorList>
    </citation>
    <scope>NUCLEOTIDE SEQUENCE [LARGE SCALE GENOMIC DNA]</scope>
    <source>
        <strain>ZK / E33L</strain>
    </source>
</reference>
<proteinExistence type="inferred from homology"/>
<dbReference type="EC" id="4.3.2.1" evidence="1"/>
<dbReference type="EMBL" id="CP000001">
    <property type="protein sequence ID" value="AAU15897.1"/>
    <property type="molecule type" value="Genomic_DNA"/>
</dbReference>
<dbReference type="RefSeq" id="WP_000041277.1">
    <property type="nucleotide sequence ID" value="NC_006274.1"/>
</dbReference>
<dbReference type="SMR" id="Q633G5"/>
<dbReference type="KEGG" id="bcz:BCE33L4374"/>
<dbReference type="PATRIC" id="fig|288681.22.peg.998"/>
<dbReference type="UniPathway" id="UPA00068">
    <property type="reaction ID" value="UER00114"/>
</dbReference>
<dbReference type="Proteomes" id="UP000002612">
    <property type="component" value="Chromosome"/>
</dbReference>
<dbReference type="GO" id="GO:0005829">
    <property type="term" value="C:cytosol"/>
    <property type="evidence" value="ECO:0007669"/>
    <property type="project" value="TreeGrafter"/>
</dbReference>
<dbReference type="GO" id="GO:0004056">
    <property type="term" value="F:argininosuccinate lyase activity"/>
    <property type="evidence" value="ECO:0007669"/>
    <property type="project" value="UniProtKB-UniRule"/>
</dbReference>
<dbReference type="GO" id="GO:0042450">
    <property type="term" value="P:arginine biosynthetic process via ornithine"/>
    <property type="evidence" value="ECO:0007669"/>
    <property type="project" value="InterPro"/>
</dbReference>
<dbReference type="GO" id="GO:0006526">
    <property type="term" value="P:L-arginine biosynthetic process"/>
    <property type="evidence" value="ECO:0007669"/>
    <property type="project" value="UniProtKB-UniRule"/>
</dbReference>
<dbReference type="CDD" id="cd01359">
    <property type="entry name" value="Argininosuccinate_lyase"/>
    <property type="match status" value="1"/>
</dbReference>
<dbReference type="FunFam" id="1.10.275.10:FF:000002">
    <property type="entry name" value="Argininosuccinate lyase"/>
    <property type="match status" value="1"/>
</dbReference>
<dbReference type="FunFam" id="1.10.40.30:FF:000001">
    <property type="entry name" value="Argininosuccinate lyase"/>
    <property type="match status" value="1"/>
</dbReference>
<dbReference type="FunFam" id="1.20.200.10:FF:000006">
    <property type="entry name" value="Argininosuccinate lyase"/>
    <property type="match status" value="1"/>
</dbReference>
<dbReference type="Gene3D" id="1.10.40.30">
    <property type="entry name" value="Fumarase/aspartase (C-terminal domain)"/>
    <property type="match status" value="1"/>
</dbReference>
<dbReference type="Gene3D" id="1.20.200.10">
    <property type="entry name" value="Fumarase/aspartase (Central domain)"/>
    <property type="match status" value="1"/>
</dbReference>
<dbReference type="Gene3D" id="1.10.275.10">
    <property type="entry name" value="Fumarase/aspartase (N-terminal domain)"/>
    <property type="match status" value="1"/>
</dbReference>
<dbReference type="HAMAP" id="MF_00006">
    <property type="entry name" value="Arg_succ_lyase"/>
    <property type="match status" value="1"/>
</dbReference>
<dbReference type="InterPro" id="IPR029419">
    <property type="entry name" value="Arg_succ_lyase_C"/>
</dbReference>
<dbReference type="InterPro" id="IPR009049">
    <property type="entry name" value="Argininosuccinate_lyase"/>
</dbReference>
<dbReference type="InterPro" id="IPR024083">
    <property type="entry name" value="Fumarase/histidase_N"/>
</dbReference>
<dbReference type="InterPro" id="IPR020557">
    <property type="entry name" value="Fumarate_lyase_CS"/>
</dbReference>
<dbReference type="InterPro" id="IPR000362">
    <property type="entry name" value="Fumarate_lyase_fam"/>
</dbReference>
<dbReference type="InterPro" id="IPR022761">
    <property type="entry name" value="Fumarate_lyase_N"/>
</dbReference>
<dbReference type="InterPro" id="IPR008948">
    <property type="entry name" value="L-Aspartase-like"/>
</dbReference>
<dbReference type="NCBIfam" id="TIGR00838">
    <property type="entry name" value="argH"/>
    <property type="match status" value="1"/>
</dbReference>
<dbReference type="PANTHER" id="PTHR43814">
    <property type="entry name" value="ARGININOSUCCINATE LYASE"/>
    <property type="match status" value="1"/>
</dbReference>
<dbReference type="PANTHER" id="PTHR43814:SF1">
    <property type="entry name" value="ARGININOSUCCINATE LYASE"/>
    <property type="match status" value="1"/>
</dbReference>
<dbReference type="Pfam" id="PF14698">
    <property type="entry name" value="ASL_C2"/>
    <property type="match status" value="1"/>
</dbReference>
<dbReference type="Pfam" id="PF00206">
    <property type="entry name" value="Lyase_1"/>
    <property type="match status" value="1"/>
</dbReference>
<dbReference type="PRINTS" id="PR00145">
    <property type="entry name" value="ARGSUCLYASE"/>
</dbReference>
<dbReference type="PRINTS" id="PR00149">
    <property type="entry name" value="FUMRATELYASE"/>
</dbReference>
<dbReference type="SUPFAM" id="SSF48557">
    <property type="entry name" value="L-aspartase-like"/>
    <property type="match status" value="1"/>
</dbReference>
<dbReference type="PROSITE" id="PS00163">
    <property type="entry name" value="FUMARATE_LYASES"/>
    <property type="match status" value="1"/>
</dbReference>
<accession>Q633G5</accession>
<evidence type="ECO:0000255" key="1">
    <source>
        <dbReference type="HAMAP-Rule" id="MF_00006"/>
    </source>
</evidence>
<organism>
    <name type="scientific">Bacillus cereus (strain ZK / E33L)</name>
    <dbReference type="NCBI Taxonomy" id="288681"/>
    <lineage>
        <taxon>Bacteria</taxon>
        <taxon>Bacillati</taxon>
        <taxon>Bacillota</taxon>
        <taxon>Bacilli</taxon>
        <taxon>Bacillales</taxon>
        <taxon>Bacillaceae</taxon>
        <taxon>Bacillus</taxon>
        <taxon>Bacillus cereus group</taxon>
    </lineage>
</organism>
<gene>
    <name evidence="1" type="primary">argH</name>
    <name type="ordered locus">BCE33L4374</name>
</gene>